<accession>B7PKZ1</accession>
<accession>Q4PMS6</accession>
<name>CYTL2_IXOSC</name>
<reference evidence="18" key="1">
    <citation type="submission" date="2005-05" db="EMBL/GenBank/DDBJ databases">
        <title>An updated catalog of salivary gland transcripts from Ixodes scapularis ticks.</title>
        <authorList>
            <person name="Ribeiro J.M.C."/>
        </authorList>
    </citation>
    <scope>NUCLEOTIDE SEQUENCE [MRNA]</scope>
    <source>
        <strain evidence="18">ISN-L-110</strain>
        <tissue evidence="18">Salivary gland</tissue>
    </source>
</reference>
<reference key="2">
    <citation type="submission" date="2008-03" db="EMBL/GenBank/DDBJ databases">
        <title>Annotation of Ixodes scapularis.</title>
        <authorList>
            <consortium name="Ixodes scapularis Genome Project Consortium"/>
            <person name="Caler E."/>
            <person name="Hannick L.I."/>
            <person name="Bidwell S."/>
            <person name="Joardar V."/>
            <person name="Thiagarajan M."/>
            <person name="Amedeo P."/>
            <person name="Galinsky K.J."/>
            <person name="Schobel S."/>
            <person name="Inman J."/>
            <person name="Hostetler J."/>
            <person name="Miller J."/>
            <person name="Hammond M."/>
            <person name="Megy K."/>
            <person name="Lawson D."/>
            <person name="Kodira C."/>
            <person name="Sutton G."/>
            <person name="Meyer J."/>
            <person name="Hill C.A."/>
            <person name="Birren B."/>
            <person name="Nene V."/>
            <person name="Collins F."/>
            <person name="Alarcon-Chaidez F."/>
            <person name="Wikel S."/>
            <person name="Strausberg R."/>
        </authorList>
    </citation>
    <scope>NUCLEOTIDE SEQUENCE [LARGE SCALE GENOMIC DNA]</scope>
    <source>
        <strain>Wikel</strain>
    </source>
</reference>
<reference key="3">
    <citation type="journal article" date="2007" name="J. Biol. Chem.">
        <title>Selective cysteine protease inhibition contributes to blood-feeding success of the tick Ixodes scapularis.</title>
        <authorList>
            <person name="Kotsyfakis M."/>
            <person name="Karim S."/>
            <person name="Andersen J.F."/>
            <person name="Mather T.N."/>
            <person name="Ribeiro J.M."/>
        </authorList>
    </citation>
    <scope>FUNCTION</scope>
    <scope>DISRUPTION PHENOTYPE</scope>
    <scope>INDUCTION BY FEEDING</scope>
    <scope>TISSUE SPECIFICITY</scope>
</reference>
<reference key="4">
    <citation type="journal article" date="2008" name="J. Immunol.">
        <title>Cutting edge: Immunity against a 'silent' salivary antigen of the Lyme vector Ixodes scapularis impairs its ability to feed.</title>
        <authorList>
            <person name="Kotsyfakis M."/>
            <person name="Anderson J.M."/>
            <person name="Andersen J.F."/>
            <person name="Calvo E."/>
            <person name="Francischetti I.M."/>
            <person name="Mather T.N."/>
            <person name="Valenzuela J.G."/>
            <person name="Ribeiro J.M."/>
        </authorList>
    </citation>
    <scope>FUNCTION</scope>
</reference>
<reference key="5">
    <citation type="journal article" date="2014" name="Infect. Immun.">
        <title>The tick salivary protein sialostatin L2 inhibits caspase-1-mediated inflammation during Anaplasma phagocytophilum infection.</title>
        <authorList>
            <person name="Chen G."/>
            <person name="Wang X."/>
            <person name="Severo M.S."/>
            <person name="Sakhon O.S."/>
            <person name="Sohail M."/>
            <person name="Brown L.J."/>
            <person name="Sircar M."/>
            <person name="Snyder G.A."/>
            <person name="Sundberg E.J."/>
            <person name="Ulland T.K."/>
            <person name="Olivier A.K."/>
            <person name="Andersen J.F."/>
            <person name="Zhou Y."/>
            <person name="Shi G.P."/>
            <person name="Sutterwala F.S."/>
            <person name="Kotsyfakis M."/>
            <person name="Pedra J.H."/>
        </authorList>
    </citation>
    <scope>FUNCTION (MICROBIAL INFECTION)</scope>
</reference>
<reference key="6">
    <citation type="journal article" date="2015" name="Parasite Immunol.">
        <title>Tick salivary cystatin sialostatin L2 suppresses IFN responses in mouse dendritic cells.</title>
        <authorList>
            <person name="Lieskovska J."/>
            <person name="Palenikova J."/>
            <person name="Sirmarova J."/>
            <person name="Elsterova J."/>
            <person name="Kotsyfakis M."/>
            <person name="Campos Chagas A."/>
            <person name="Calvo E."/>
            <person name="Ruzek D."/>
            <person name="Kopecky J."/>
        </authorList>
    </citation>
    <scope>FUNCTION</scope>
    <scope>FUNCTION (MICROBIAL INFECTION)</scope>
</reference>
<reference key="7">
    <citation type="journal article" date="2015" name="Parasit. Vectors">
        <title>Tick sialostatins L and L2 differentially influence dendritic cell responses to Borrelia spirochetes.</title>
        <authorList>
            <person name="Lieskovska J."/>
            <person name="Palenikova J."/>
            <person name="Langhansova H."/>
            <person name="Campos Chagas A."/>
            <person name="Calvo E."/>
            <person name="Kotsyfakis M."/>
            <person name="Kopecky J."/>
        </authorList>
    </citation>
    <scope>FUNCTION (MICROBIAL INFECTION)</scope>
</reference>
<reference key="8">
    <citation type="journal article" date="2016" name="Infect. Immun.">
        <title>The Tick Protein Sialostatin L2 Binds to Annexin A2 and Inhibits NLRC4-Mediated Inflammasome Activation.</title>
        <authorList>
            <person name="Wang X."/>
            <person name="Shaw D.K."/>
            <person name="Sakhon O.S."/>
            <person name="Snyder G.A."/>
            <person name="Sundberg E.J."/>
            <person name="Santambrogio L."/>
            <person name="Sutterwala F.S."/>
            <person name="Dumler J.S."/>
            <person name="Shirey K.A."/>
            <person name="Perkins D.J."/>
            <person name="Richard K."/>
            <person name="Chagas A.C."/>
            <person name="Calvo E."/>
            <person name="Kopecky J."/>
            <person name="Kotsyfakis M."/>
            <person name="Pedra J.H.F."/>
        </authorList>
    </citation>
    <scope>FUNCTION (MICROBIAL INFECTION)</scope>
    <scope>INTERACTION WITH HOST ANXA2</scope>
</reference>
<reference key="9">
    <citation type="journal article" date="2024" name="Front. Immunol.">
        <title>Tick cysteine protease inhibitors suppress immune responses in mannan-induced psoriasis-like inflammation.</title>
        <authorList>
            <person name="Wu H."/>
            <person name="Jmel M.A."/>
            <person name="Chai J."/>
            <person name="Tian M."/>
            <person name="Xu X."/>
            <person name="Hui Y."/>
            <person name="Nandakumar K.S."/>
            <person name="Kotsyfakis M."/>
        </authorList>
    </citation>
    <scope>FUNCTION</scope>
</reference>
<reference evidence="20 21" key="10">
    <citation type="journal article" date="2010" name="Mol. Microbiol.">
        <title>The crystal structures of two salivary cystatins from the tick Ixodes scapularis and the effect of these inhibitors on the establishment of Borrelia burgdorferi infection in a murine model.</title>
        <authorList>
            <person name="Kotsyfakis M."/>
            <person name="Horka H."/>
            <person name="Salat J."/>
            <person name="Andersen J.F."/>
        </authorList>
    </citation>
    <scope>X-RAY CRYSTALLOGRAPHY (1.52 ANGSTROMS) OF 19-132 OF WILD TYPE AND SELENOMETHIONINE DERIVATIVE OF MUTANT</scope>
    <scope>FUNCTION</scope>
    <scope>FUNCTION (MICROBIAL INFECTION)</scope>
    <scope>SUBUNIT</scope>
    <scope>DISULFIDE BONDS</scope>
</reference>
<evidence type="ECO:0000250" key="1">
    <source>
        <dbReference type="UniProtKB" id="P01040"/>
    </source>
</evidence>
<evidence type="ECO:0000255" key="2"/>
<evidence type="ECO:0000255" key="3">
    <source>
        <dbReference type="RuleBase" id="RU362130"/>
    </source>
</evidence>
<evidence type="ECO:0000269" key="4">
    <source>
    </source>
</evidence>
<evidence type="ECO:0000269" key="5">
    <source>
    </source>
</evidence>
<evidence type="ECO:0000269" key="6">
    <source>
    </source>
</evidence>
<evidence type="ECO:0000269" key="7">
    <source>
    </source>
</evidence>
<evidence type="ECO:0000269" key="8">
    <source>
    </source>
</evidence>
<evidence type="ECO:0000269" key="9">
    <source>
    </source>
</evidence>
<evidence type="ECO:0000269" key="10">
    <source>
    </source>
</evidence>
<evidence type="ECO:0000269" key="11">
    <source>
    </source>
</evidence>
<evidence type="ECO:0000303" key="12">
    <source>
    </source>
</evidence>
<evidence type="ECO:0000303" key="13">
    <source>
    </source>
</evidence>
<evidence type="ECO:0000303" key="14">
    <source>
    </source>
</evidence>
<evidence type="ECO:0000303" key="15">
    <source>
    </source>
</evidence>
<evidence type="ECO:0000305" key="16"/>
<evidence type="ECO:0000305" key="17">
    <source>
    </source>
</evidence>
<evidence type="ECO:0000312" key="18">
    <source>
        <dbReference type="EMBL" id="AAY66685.1"/>
    </source>
</evidence>
<evidence type="ECO:0000312" key="19">
    <source>
        <dbReference type="EMBL" id="EEC07263.1"/>
    </source>
</evidence>
<evidence type="ECO:0007744" key="20">
    <source>
        <dbReference type="PDB" id="3LH4"/>
    </source>
</evidence>
<evidence type="ECO:0007744" key="21">
    <source>
        <dbReference type="PDB" id="3MWZ"/>
    </source>
</evidence>
<evidence type="ECO:0007829" key="22">
    <source>
        <dbReference type="PDB" id="3MWZ"/>
    </source>
</evidence>
<protein>
    <recommendedName>
        <fullName evidence="16">Salivary cystatin-L2</fullName>
    </recommendedName>
    <alternativeName>
        <fullName evidence="12 13 14 15">Sialostatin-L2</fullName>
        <shortName evidence="15">SialoL2</shortName>
    </alternativeName>
</protein>
<dbReference type="EMBL" id="DQ066048">
    <property type="protein sequence ID" value="AAY66685.1"/>
    <property type="molecule type" value="mRNA"/>
</dbReference>
<dbReference type="EMBL" id="DS737013">
    <property type="protein sequence ID" value="EEC07263.1"/>
    <property type="molecule type" value="Genomic_DNA"/>
</dbReference>
<dbReference type="RefSeq" id="XP_002434439.1">
    <property type="nucleotide sequence ID" value="XM_002434394.1"/>
</dbReference>
<dbReference type="PDB" id="3LH4">
    <property type="method" value="X-ray"/>
    <property type="resolution" value="1.80 A"/>
    <property type="chains" value="A=19-132"/>
</dbReference>
<dbReference type="PDB" id="3MWZ">
    <property type="method" value="X-ray"/>
    <property type="resolution" value="1.52 A"/>
    <property type="chains" value="A=19-132"/>
</dbReference>
<dbReference type="PDBsum" id="3LH4"/>
<dbReference type="PDBsum" id="3MWZ"/>
<dbReference type="SMR" id="B7PKZ1"/>
<dbReference type="STRING" id="6945.B7PKZ1"/>
<dbReference type="MEROPS" id="I25.049"/>
<dbReference type="PaxDb" id="6945-B7PKZ1"/>
<dbReference type="EnsemblMetazoa" id="ISCW018602-RA">
    <property type="protein sequence ID" value="ISCW018602-PA"/>
    <property type="gene ID" value="ISCW018602"/>
</dbReference>
<dbReference type="KEGG" id="isc:8053083"/>
<dbReference type="VEuPathDB" id="VectorBase:ISCI018602"/>
<dbReference type="VEuPathDB" id="VectorBase:ISCP_033771"/>
<dbReference type="VEuPathDB" id="VectorBase:ISCW018602"/>
<dbReference type="HOGENOM" id="CLU_1898537_0_0_1"/>
<dbReference type="InParanoid" id="B7PKZ1"/>
<dbReference type="OrthoDB" id="6481506at2759"/>
<dbReference type="PhylomeDB" id="B7PKZ1"/>
<dbReference type="EvolutionaryTrace" id="B7PKZ1"/>
<dbReference type="Proteomes" id="UP000001555">
    <property type="component" value="Unassembled WGS sequence"/>
</dbReference>
<dbReference type="GO" id="GO:0005737">
    <property type="term" value="C:cytoplasm"/>
    <property type="evidence" value="ECO:0000318"/>
    <property type="project" value="GO_Central"/>
</dbReference>
<dbReference type="GO" id="GO:0005615">
    <property type="term" value="C:extracellular space"/>
    <property type="evidence" value="ECO:0000318"/>
    <property type="project" value="GO_Central"/>
</dbReference>
<dbReference type="GO" id="GO:0031982">
    <property type="term" value="C:vesicle"/>
    <property type="evidence" value="ECO:0000318"/>
    <property type="project" value="GO_Central"/>
</dbReference>
<dbReference type="GO" id="GO:0004869">
    <property type="term" value="F:cysteine-type endopeptidase inhibitor activity"/>
    <property type="evidence" value="ECO:0000314"/>
    <property type="project" value="UniProtKB"/>
</dbReference>
<dbReference type="CDD" id="cd00042">
    <property type="entry name" value="CY"/>
    <property type="match status" value="1"/>
</dbReference>
<dbReference type="Gene3D" id="3.10.450.10">
    <property type="match status" value="1"/>
</dbReference>
<dbReference type="InterPro" id="IPR000010">
    <property type="entry name" value="Cystatin_dom"/>
</dbReference>
<dbReference type="InterPro" id="IPR046350">
    <property type="entry name" value="Cystatin_sf"/>
</dbReference>
<dbReference type="InterPro" id="IPR018073">
    <property type="entry name" value="Prot_inh_cystat_CS"/>
</dbReference>
<dbReference type="PANTHER" id="PTHR46186">
    <property type="entry name" value="CYSTATIN"/>
    <property type="match status" value="1"/>
</dbReference>
<dbReference type="PANTHER" id="PTHR46186:SF2">
    <property type="entry name" value="CYSTATIN"/>
    <property type="match status" value="1"/>
</dbReference>
<dbReference type="Pfam" id="PF00031">
    <property type="entry name" value="Cystatin"/>
    <property type="match status" value="1"/>
</dbReference>
<dbReference type="SMART" id="SM00043">
    <property type="entry name" value="CY"/>
    <property type="match status" value="1"/>
</dbReference>
<dbReference type="SUPFAM" id="SSF54403">
    <property type="entry name" value="Cystatin/monellin"/>
    <property type="match status" value="1"/>
</dbReference>
<dbReference type="PROSITE" id="PS00287">
    <property type="entry name" value="CYSTATIN"/>
    <property type="match status" value="1"/>
</dbReference>
<feature type="signal peptide" evidence="2">
    <location>
        <begin position="1"/>
        <end position="18"/>
    </location>
</feature>
<feature type="chain" id="PRO_5005396719" description="Salivary cystatin-L2" evidence="3">
    <location>
        <begin position="19"/>
        <end position="132"/>
    </location>
</feature>
<feature type="domain" description="Cystatin" evidence="2">
    <location>
        <begin position="28"/>
        <end position="117"/>
    </location>
</feature>
<feature type="region of interest" description="Required for interaction with mouse ANXA2" evidence="10">
    <location>
        <begin position="87"/>
        <end position="131"/>
    </location>
</feature>
<feature type="site" description="Reactive site" evidence="1">
    <location>
        <position position="24"/>
    </location>
</feature>
<feature type="disulfide bond" evidence="6 20">
    <location>
        <begin position="88"/>
        <end position="99"/>
    </location>
</feature>
<feature type="disulfide bond" evidence="6 20">
    <location>
        <begin position="110"/>
        <end position="129"/>
    </location>
</feature>
<feature type="sequence conflict" description="In Ref. 1; AAY66685." evidence="16" ref="1">
    <original>V</original>
    <variation>L</variation>
    <location>
        <position position="10"/>
    </location>
</feature>
<feature type="sequence conflict" description="In Ref. 1; AAY66685." evidence="16" ref="1">
    <original>S</original>
    <variation>N</variation>
    <location>
        <position position="125"/>
    </location>
</feature>
<feature type="strand" evidence="22">
    <location>
        <begin position="27"/>
        <end position="29"/>
    </location>
</feature>
<feature type="helix" evidence="22">
    <location>
        <begin position="36"/>
        <end position="50"/>
    </location>
</feature>
<feature type="strand" evidence="22">
    <location>
        <begin position="57"/>
        <end position="89"/>
    </location>
</feature>
<feature type="turn" evidence="22">
    <location>
        <begin position="96"/>
        <end position="98"/>
    </location>
</feature>
<feature type="strand" evidence="22">
    <location>
        <begin position="107"/>
        <end position="116"/>
    </location>
</feature>
<feature type="strand" evidence="22">
    <location>
        <begin position="122"/>
        <end position="129"/>
    </location>
</feature>
<gene>
    <name evidence="19" type="ORF">IscW_ISCW018602</name>
</gene>
<organism evidence="19">
    <name type="scientific">Ixodes scapularis</name>
    <name type="common">Black-legged tick</name>
    <name type="synonym">Deer tick</name>
    <dbReference type="NCBI Taxonomy" id="6945"/>
    <lineage>
        <taxon>Eukaryota</taxon>
        <taxon>Metazoa</taxon>
        <taxon>Ecdysozoa</taxon>
        <taxon>Arthropoda</taxon>
        <taxon>Chelicerata</taxon>
        <taxon>Arachnida</taxon>
        <taxon>Acari</taxon>
        <taxon>Parasitiformes</taxon>
        <taxon>Ixodida</taxon>
        <taxon>Ixodoidea</taxon>
        <taxon>Ixodidae</taxon>
        <taxon>Ixodinae</taxon>
        <taxon>Ixodes</taxon>
    </lineage>
</organism>
<proteinExistence type="evidence at protein level"/>
<sequence length="132" mass="14323">MTSSLALVLVFGGAAVCAELALRGGYRERSNQDDPEYLELAHYATSTWSAQQPGKTHFDTVVEVLKVETQTVAGTNYRLTLKVAESTCELTSTYNKDTCQANANAAQRTCTTVIYRNLQGEKSISSFECAAA</sequence>
<comment type="function">
    <text evidence="4 5 6 8 11">Contributes to the suppression of the host's immune response to tick salivary proteins and is important for successful feeding on hosts (PubMed:17698852, PubMed:18832673). Inhibitor of cysteine proteinases (PubMed:17698852, PubMed:20545851, PubMed:38444844). Inhibits host immune responses, probably via its inhibition of host cathepsins (PubMed:17698852). Inhibits host papain (in vitro) (PubMed:20545851). Inhibits host cathepsin L (CTSL) (in vitro) (PubMed:17698852, PubMed:20545851, PubMed:38444844). Inhibits host cathepsin L2 (CTSV) (in vitro) (PubMed:17698852). Attenuates IFN-beta (IFNB1)-triggered JAK/STAT signaling pathway in mouse dendritic cells (PubMed:25408129). Suppresses induction of interferon-stimulated gene IRF7 and production of CXCL10 in lipopolysaccharide (LPS)-activated dendritic cells (PubMed:25408129).</text>
</comment>
<comment type="function">
    <text evidence="6 9">(Microbial infection) Down-regulates TLR2-mediated host responses to infection by Borrelia burgdorferi and the production of chemokines CCL3 and CXCL10 by host dendritic cells (PubMed:25975355). Enhances infection by the tick-transmitted pathogen B.burgdorferi (in vitro) (PubMed:20545851).</text>
</comment>
<comment type="function">
    <text evidence="7 10">(Microbial infection) Inhibits host inflammatory responses to Anaplasma phagocytophilum infection (PubMed:24686067, PubMed:27045038). Interacts with mouse ANXA2 and suppresses oligomerization of NLRC4, a key component of host inflammasomes that sense A.phagocytophilum infection (PubMed:27045038). Indirectly targets caspase-1 (CASP1) activation and subsequent IL-1beta (IL1B) and IL18 release by inhibiting reactive oxygen species (ROS) production from NADPH oxidase complex in A.phagocytophilum-infected mouse macrophages (PubMed:24686067).</text>
</comment>
<comment type="function">
    <text evidence="8">(Microbial infection) Promotes replication of tick-borne encephalitis virus in mouse dendritic cells and reduces anti-viral effect of host IFN-beta (IFNB1).</text>
</comment>
<comment type="subunit">
    <text evidence="10 17">Monomer (Probable). Interacts (via loop 2) with mouse ANXA2; the interaction results in reduced activation of mouse NLRC4 inflammasome formation upon Anaplasma phagocytophilum infection (PubMed:27045038).</text>
</comment>
<comment type="subcellular location">
    <subcellularLocation>
        <location evidence="16">Secreted</location>
    </subcellularLocation>
</comment>
<comment type="tissue specificity">
    <text evidence="4">Detected in salivary gland and midgut.</text>
</comment>
<comment type="induction">
    <text evidence="4">Strongly up-regulated in salivary gland during feeding.</text>
</comment>
<comment type="disruption phenotype">
    <text evidence="4">Combined, RNAi-mediated down-regulation of salivary cystatin-L and salivary cystatin-L2 in salivary glands strongly impairs the tick's ability to feed on hosts. About 40% of the ticks cannot feed and die. The remainder show much reduced blood intake, appear unhealthy and display strongly reduced egg laying. RNAi-treated ticks show an impaired ability to suppress the host's immune response to tick salivary proteins.</text>
</comment>
<comment type="miscellaneous">
    <text evidence="5 11">Decreases symptoms in mouse model of mannan-induced psoriasis-like inflammation by modulating immune responses (PubMed:38444844). Vaccination of guinea pigs against the protein increases tick rejection during feeding, prolongs feeding times, reduces blood intake and induces visible inflammation at the bite site (PubMed:18832673).</text>
</comment>
<comment type="similarity">
    <text evidence="16">Belongs to the cystatin family.</text>
</comment>
<keyword id="KW-0002">3D-structure</keyword>
<keyword id="KW-1015">Disulfide bond</keyword>
<keyword id="KW-0646">Protease inhibitor</keyword>
<keyword id="KW-1185">Reference proteome</keyword>
<keyword id="KW-0964">Secreted</keyword>
<keyword id="KW-0732">Signal</keyword>
<keyword id="KW-0789">Thiol protease inhibitor</keyword>